<gene>
    <name evidence="1" type="primary">codY</name>
    <name type="ordered locus">SH1659</name>
</gene>
<organism>
    <name type="scientific">Staphylococcus haemolyticus (strain JCSC1435)</name>
    <dbReference type="NCBI Taxonomy" id="279808"/>
    <lineage>
        <taxon>Bacteria</taxon>
        <taxon>Bacillati</taxon>
        <taxon>Bacillota</taxon>
        <taxon>Bacilli</taxon>
        <taxon>Bacillales</taxon>
        <taxon>Staphylococcaceae</taxon>
        <taxon>Staphylococcus</taxon>
    </lineage>
</organism>
<reference key="1">
    <citation type="journal article" date="2005" name="J. Bacteriol.">
        <title>Whole-genome sequencing of Staphylococcus haemolyticus uncovers the extreme plasticity of its genome and the evolution of human-colonizing staphylococcal species.</title>
        <authorList>
            <person name="Takeuchi F."/>
            <person name="Watanabe S."/>
            <person name="Baba T."/>
            <person name="Yuzawa H."/>
            <person name="Ito T."/>
            <person name="Morimoto Y."/>
            <person name="Kuroda M."/>
            <person name="Cui L."/>
            <person name="Takahashi M."/>
            <person name="Ankai A."/>
            <person name="Baba S."/>
            <person name="Fukui S."/>
            <person name="Lee J.C."/>
            <person name="Hiramatsu K."/>
        </authorList>
    </citation>
    <scope>NUCLEOTIDE SEQUENCE [LARGE SCALE GENOMIC DNA]</scope>
    <source>
        <strain>JCSC1435</strain>
    </source>
</reference>
<feature type="chain" id="PRO_1000051545" description="Global transcriptional regulator CodY">
    <location>
        <begin position="1"/>
        <end position="257"/>
    </location>
</feature>
<feature type="DNA-binding region" description="H-T-H motif" evidence="1">
    <location>
        <begin position="203"/>
        <end position="222"/>
    </location>
</feature>
<feature type="region of interest" description="GAF domain" evidence="1">
    <location>
        <begin position="1"/>
        <end position="155"/>
    </location>
</feature>
<keyword id="KW-0963">Cytoplasm</keyword>
<keyword id="KW-0238">DNA-binding</keyword>
<keyword id="KW-0678">Repressor</keyword>
<keyword id="KW-0804">Transcription</keyword>
<keyword id="KW-0805">Transcription regulation</keyword>
<comment type="function">
    <text evidence="1">DNA-binding global transcriptional regulator which is involved in the adaptive response to starvation and acts by directly or indirectly controlling the expression of numerous genes in response to nutrient availability. During rapid exponential growth, CodY is highly active and represses genes whose products allow adaptation to nutrient depletion.</text>
</comment>
<comment type="subcellular location">
    <subcellularLocation>
        <location evidence="1">Cytoplasm</location>
    </subcellularLocation>
</comment>
<comment type="similarity">
    <text evidence="1">Belongs to the CodY family.</text>
</comment>
<evidence type="ECO:0000255" key="1">
    <source>
        <dbReference type="HAMAP-Rule" id="MF_00621"/>
    </source>
</evidence>
<name>CODY_STAHJ</name>
<protein>
    <recommendedName>
        <fullName evidence="1">Global transcriptional regulator CodY</fullName>
    </recommendedName>
</protein>
<sequence>MSLLSKTRELNTLLQKHKGIAVDFKDVAQTISSVTVTNVFIVSRRGKILGSSLNELLKSQRINEMLESKHIPSEYTELLMDVKQTESNIDIDNELTVFPPEDKEVFSSSRTTVFPILGGGERLGTLVLGRVKDDFNENDLVLGEYAATVIGMEILREKHNEVEKEARDKAAITMAINSLSYSEKEAIEHIFEELGGNEGLLIASKVADRVGITRSVIVNALRKLESAGVIESRSLGMKGTFIKVKKEKFLDELERNK</sequence>
<dbReference type="EMBL" id="AP006716">
    <property type="protein sequence ID" value="BAE04968.1"/>
    <property type="molecule type" value="Genomic_DNA"/>
</dbReference>
<dbReference type="RefSeq" id="WP_011275945.1">
    <property type="nucleotide sequence ID" value="NC_007168.1"/>
</dbReference>
<dbReference type="SMR" id="Q4L5V7"/>
<dbReference type="GeneID" id="93781037"/>
<dbReference type="KEGG" id="sha:SH1659"/>
<dbReference type="eggNOG" id="COG4465">
    <property type="taxonomic scope" value="Bacteria"/>
</dbReference>
<dbReference type="HOGENOM" id="CLU_089581_0_0_9"/>
<dbReference type="OrthoDB" id="2056at2"/>
<dbReference type="Proteomes" id="UP000000543">
    <property type="component" value="Chromosome"/>
</dbReference>
<dbReference type="GO" id="GO:0005737">
    <property type="term" value="C:cytoplasm"/>
    <property type="evidence" value="ECO:0007669"/>
    <property type="project" value="UniProtKB-SubCell"/>
</dbReference>
<dbReference type="GO" id="GO:0003677">
    <property type="term" value="F:DNA binding"/>
    <property type="evidence" value="ECO:0007669"/>
    <property type="project" value="UniProtKB-UniRule"/>
</dbReference>
<dbReference type="GO" id="GO:0003700">
    <property type="term" value="F:DNA-binding transcription factor activity"/>
    <property type="evidence" value="ECO:0007669"/>
    <property type="project" value="InterPro"/>
</dbReference>
<dbReference type="GO" id="GO:0005525">
    <property type="term" value="F:GTP binding"/>
    <property type="evidence" value="ECO:0007669"/>
    <property type="project" value="InterPro"/>
</dbReference>
<dbReference type="GO" id="GO:0045892">
    <property type="term" value="P:negative regulation of DNA-templated transcription"/>
    <property type="evidence" value="ECO:0007669"/>
    <property type="project" value="UniProtKB-UniRule"/>
</dbReference>
<dbReference type="FunFam" id="1.10.10.10:FF:000034">
    <property type="entry name" value="GTP-sensing transcriptional pleiotropic repressor CodY"/>
    <property type="match status" value="1"/>
</dbReference>
<dbReference type="FunFam" id="3.30.450.40:FF:000003">
    <property type="entry name" value="GTP-sensing transcriptional pleiotropic repressor CodY"/>
    <property type="match status" value="1"/>
</dbReference>
<dbReference type="Gene3D" id="3.30.450.40">
    <property type="match status" value="1"/>
</dbReference>
<dbReference type="Gene3D" id="1.10.10.10">
    <property type="entry name" value="Winged helix-like DNA-binding domain superfamily/Winged helix DNA-binding domain"/>
    <property type="match status" value="1"/>
</dbReference>
<dbReference type="HAMAP" id="MF_00621">
    <property type="entry name" value="HTH_type_CodY"/>
    <property type="match status" value="1"/>
</dbReference>
<dbReference type="InterPro" id="IPR014154">
    <property type="entry name" value="CodY"/>
</dbReference>
<dbReference type="InterPro" id="IPR029016">
    <property type="entry name" value="GAF-like_dom_sf"/>
</dbReference>
<dbReference type="InterPro" id="IPR013198">
    <property type="entry name" value="GTP_trans_reg_CodY_C"/>
</dbReference>
<dbReference type="InterPro" id="IPR010312">
    <property type="entry name" value="Transc_reg_CodY_N"/>
</dbReference>
<dbReference type="InterPro" id="IPR036388">
    <property type="entry name" value="WH-like_DNA-bd_sf"/>
</dbReference>
<dbReference type="InterPro" id="IPR036390">
    <property type="entry name" value="WH_DNA-bd_sf"/>
</dbReference>
<dbReference type="NCBIfam" id="TIGR02787">
    <property type="entry name" value="codY_Gpos"/>
    <property type="match status" value="1"/>
</dbReference>
<dbReference type="NCBIfam" id="NF003170">
    <property type="entry name" value="PRK04158.1"/>
    <property type="match status" value="1"/>
</dbReference>
<dbReference type="PANTHER" id="PTHR40062:SF1">
    <property type="entry name" value="GLOBAL TRANSCRIPTIONAL REGULATOR CODY"/>
    <property type="match status" value="1"/>
</dbReference>
<dbReference type="PANTHER" id="PTHR40062">
    <property type="entry name" value="GTP-SENSING TRANSCRIPTIONAL PLEIOTROPIC REPRESSOR CODY"/>
    <property type="match status" value="1"/>
</dbReference>
<dbReference type="Pfam" id="PF06018">
    <property type="entry name" value="CodY"/>
    <property type="match status" value="1"/>
</dbReference>
<dbReference type="Pfam" id="PF08222">
    <property type="entry name" value="HTH_CodY"/>
    <property type="match status" value="1"/>
</dbReference>
<dbReference type="PIRSF" id="PIRSF011572">
    <property type="entry name" value="GTP_sensing_CodY"/>
    <property type="match status" value="1"/>
</dbReference>
<dbReference type="SUPFAM" id="SSF46785">
    <property type="entry name" value="Winged helix' DNA-binding domain"/>
    <property type="match status" value="1"/>
</dbReference>
<proteinExistence type="inferred from homology"/>
<accession>Q4L5V7</accession>